<reference key="1">
    <citation type="journal article" date="2009" name="Appl. Environ. Microbiol.">
        <title>Metabolic versatility and indigenous origin of the archaeon Thermococcus sibiricus, isolated from a siberian oil reservoir, as revealed by genome analysis.</title>
        <authorList>
            <person name="Mardanov A.V."/>
            <person name="Ravin N.V."/>
            <person name="Svetlitchnyi V.A."/>
            <person name="Beletsky A.V."/>
            <person name="Miroshnichenko M.L."/>
            <person name="Bonch-Osmolovskaya E.A."/>
            <person name="Skryabin K.G."/>
        </authorList>
    </citation>
    <scope>NUCLEOTIDE SEQUENCE [LARGE SCALE GENOMIC DNA]</scope>
    <source>
        <strain>DSM 12597 / MM 739</strain>
    </source>
</reference>
<feature type="chain" id="PRO_1000202293" description="Ribonuclease HII">
    <location>
        <begin position="1"/>
        <end position="224"/>
    </location>
</feature>
<feature type="domain" description="RNase H type-2" evidence="2">
    <location>
        <begin position="1"/>
        <end position="210"/>
    </location>
</feature>
<feature type="binding site" evidence="1">
    <location>
        <position position="7"/>
    </location>
    <ligand>
        <name>a divalent metal cation</name>
        <dbReference type="ChEBI" id="CHEBI:60240"/>
    </ligand>
</feature>
<feature type="binding site" evidence="1">
    <location>
        <position position="8"/>
    </location>
    <ligand>
        <name>a divalent metal cation</name>
        <dbReference type="ChEBI" id="CHEBI:60240"/>
    </ligand>
</feature>
<feature type="binding site" evidence="1">
    <location>
        <position position="105"/>
    </location>
    <ligand>
        <name>a divalent metal cation</name>
        <dbReference type="ChEBI" id="CHEBI:60240"/>
    </ligand>
</feature>
<sequence>MKLGGIDEAGRGPVVGPLVIAAVVIDESKIEKFEALGVKDSKKLSPKKREELFEKIIELVDDYFILELSPEDIDKREGTMNDFEVENFAKVLNSLKIKPDLVYIDAADVNEERFGIVVREKLSFYPKIIAEHKADSKYIPVAAASILAKVTRDKAIERLKEIYGNIGSGYPSDPITRKFLEEYYKEHGSFPPVVRRSWKTLKKIEEKLQKEKNQSNLLNFLKKS</sequence>
<protein>
    <recommendedName>
        <fullName evidence="1">Ribonuclease HII</fullName>
        <shortName evidence="1">RNase HII</shortName>
        <ecNumber evidence="1">3.1.26.4</ecNumber>
    </recommendedName>
</protein>
<gene>
    <name evidence="1" type="primary">rnhB</name>
    <name type="ordered locus">TSIB_0413</name>
</gene>
<dbReference type="EC" id="3.1.26.4" evidence="1"/>
<dbReference type="EMBL" id="CP001463">
    <property type="protein sequence ID" value="ACS89479.1"/>
    <property type="molecule type" value="Genomic_DNA"/>
</dbReference>
<dbReference type="RefSeq" id="WP_015848699.1">
    <property type="nucleotide sequence ID" value="NC_012883.1"/>
</dbReference>
<dbReference type="SMR" id="C6A1I4"/>
<dbReference type="STRING" id="604354.TSIB_0413"/>
<dbReference type="GeneID" id="8095399"/>
<dbReference type="KEGG" id="tsi:TSIB_0413"/>
<dbReference type="eggNOG" id="arCOG04121">
    <property type="taxonomic scope" value="Archaea"/>
</dbReference>
<dbReference type="HOGENOM" id="CLU_036532_0_4_2"/>
<dbReference type="OrthoDB" id="33866at2157"/>
<dbReference type="Proteomes" id="UP000009079">
    <property type="component" value="Chromosome"/>
</dbReference>
<dbReference type="GO" id="GO:0005737">
    <property type="term" value="C:cytoplasm"/>
    <property type="evidence" value="ECO:0007669"/>
    <property type="project" value="UniProtKB-SubCell"/>
</dbReference>
<dbReference type="GO" id="GO:0032299">
    <property type="term" value="C:ribonuclease H2 complex"/>
    <property type="evidence" value="ECO:0007669"/>
    <property type="project" value="TreeGrafter"/>
</dbReference>
<dbReference type="GO" id="GO:0030145">
    <property type="term" value="F:manganese ion binding"/>
    <property type="evidence" value="ECO:0007669"/>
    <property type="project" value="UniProtKB-UniRule"/>
</dbReference>
<dbReference type="GO" id="GO:0003723">
    <property type="term" value="F:RNA binding"/>
    <property type="evidence" value="ECO:0007669"/>
    <property type="project" value="InterPro"/>
</dbReference>
<dbReference type="GO" id="GO:0004523">
    <property type="term" value="F:RNA-DNA hybrid ribonuclease activity"/>
    <property type="evidence" value="ECO:0007669"/>
    <property type="project" value="UniProtKB-UniRule"/>
</dbReference>
<dbReference type="GO" id="GO:0043137">
    <property type="term" value="P:DNA replication, removal of RNA primer"/>
    <property type="evidence" value="ECO:0007669"/>
    <property type="project" value="TreeGrafter"/>
</dbReference>
<dbReference type="GO" id="GO:0006298">
    <property type="term" value="P:mismatch repair"/>
    <property type="evidence" value="ECO:0007669"/>
    <property type="project" value="TreeGrafter"/>
</dbReference>
<dbReference type="CDD" id="cd07180">
    <property type="entry name" value="RNase_HII_archaea_like"/>
    <property type="match status" value="1"/>
</dbReference>
<dbReference type="FunFam" id="1.10.10.460:FF:000001">
    <property type="entry name" value="Ribonuclease"/>
    <property type="match status" value="1"/>
</dbReference>
<dbReference type="FunFam" id="3.30.420.10:FF:000139">
    <property type="entry name" value="Ribonuclease HII"/>
    <property type="match status" value="1"/>
</dbReference>
<dbReference type="Gene3D" id="3.30.420.10">
    <property type="entry name" value="Ribonuclease H-like superfamily/Ribonuclease H"/>
    <property type="match status" value="1"/>
</dbReference>
<dbReference type="Gene3D" id="1.10.10.460">
    <property type="entry name" value="Ribonuclease hii. Domain 2"/>
    <property type="match status" value="1"/>
</dbReference>
<dbReference type="HAMAP" id="MF_00052_A">
    <property type="entry name" value="RNase_HII_A"/>
    <property type="match status" value="1"/>
</dbReference>
<dbReference type="InterPro" id="IPR004649">
    <property type="entry name" value="RNase_H2_suA"/>
</dbReference>
<dbReference type="InterPro" id="IPR001352">
    <property type="entry name" value="RNase_HII/HIII"/>
</dbReference>
<dbReference type="InterPro" id="IPR024567">
    <property type="entry name" value="RNase_HII/HIII_dom"/>
</dbReference>
<dbReference type="InterPro" id="IPR020787">
    <property type="entry name" value="RNase_HII_arc"/>
</dbReference>
<dbReference type="InterPro" id="IPR023160">
    <property type="entry name" value="RNase_HII_hlx-loop-hlx_cap_dom"/>
</dbReference>
<dbReference type="InterPro" id="IPR012337">
    <property type="entry name" value="RNaseH-like_sf"/>
</dbReference>
<dbReference type="InterPro" id="IPR036397">
    <property type="entry name" value="RNaseH_sf"/>
</dbReference>
<dbReference type="NCBIfam" id="TIGR00729">
    <property type="entry name" value="ribonuclease HII"/>
    <property type="match status" value="1"/>
</dbReference>
<dbReference type="PANTHER" id="PTHR10954:SF23">
    <property type="entry name" value="RIBONUCLEASE"/>
    <property type="match status" value="1"/>
</dbReference>
<dbReference type="PANTHER" id="PTHR10954">
    <property type="entry name" value="RIBONUCLEASE H2 SUBUNIT A"/>
    <property type="match status" value="1"/>
</dbReference>
<dbReference type="Pfam" id="PF01351">
    <property type="entry name" value="RNase_HII"/>
    <property type="match status" value="1"/>
</dbReference>
<dbReference type="SUPFAM" id="SSF53098">
    <property type="entry name" value="Ribonuclease H-like"/>
    <property type="match status" value="1"/>
</dbReference>
<dbReference type="PROSITE" id="PS51975">
    <property type="entry name" value="RNASE_H_2"/>
    <property type="match status" value="1"/>
</dbReference>
<accession>C6A1I4</accession>
<evidence type="ECO:0000255" key="1">
    <source>
        <dbReference type="HAMAP-Rule" id="MF_00052"/>
    </source>
</evidence>
<evidence type="ECO:0000255" key="2">
    <source>
        <dbReference type="PROSITE-ProRule" id="PRU01319"/>
    </source>
</evidence>
<proteinExistence type="inferred from homology"/>
<keyword id="KW-0963">Cytoplasm</keyword>
<keyword id="KW-0255">Endonuclease</keyword>
<keyword id="KW-0378">Hydrolase</keyword>
<keyword id="KW-0464">Manganese</keyword>
<keyword id="KW-0479">Metal-binding</keyword>
<keyword id="KW-0540">Nuclease</keyword>
<keyword id="KW-1185">Reference proteome</keyword>
<name>RNH2_THESM</name>
<comment type="function">
    <text evidence="1">Endonuclease that specifically degrades the RNA of RNA-DNA hybrids.</text>
</comment>
<comment type="catalytic activity">
    <reaction evidence="1">
        <text>Endonucleolytic cleavage to 5'-phosphomonoester.</text>
        <dbReference type="EC" id="3.1.26.4"/>
    </reaction>
</comment>
<comment type="cofactor">
    <cofactor evidence="1">
        <name>Mn(2+)</name>
        <dbReference type="ChEBI" id="CHEBI:29035"/>
    </cofactor>
    <cofactor evidence="1">
        <name>Mg(2+)</name>
        <dbReference type="ChEBI" id="CHEBI:18420"/>
    </cofactor>
    <text evidence="1">Manganese or magnesium. Binds 1 divalent metal ion per monomer in the absence of substrate. May bind a second metal ion after substrate binding.</text>
</comment>
<comment type="subcellular location">
    <subcellularLocation>
        <location evidence="1">Cytoplasm</location>
    </subcellularLocation>
</comment>
<comment type="similarity">
    <text evidence="1">Belongs to the RNase HII family.</text>
</comment>
<organism>
    <name type="scientific">Thermococcus sibiricus (strain DSM 12597 / MM 739)</name>
    <dbReference type="NCBI Taxonomy" id="604354"/>
    <lineage>
        <taxon>Archaea</taxon>
        <taxon>Methanobacteriati</taxon>
        <taxon>Methanobacteriota</taxon>
        <taxon>Thermococci</taxon>
        <taxon>Thermococcales</taxon>
        <taxon>Thermococcaceae</taxon>
        <taxon>Thermococcus</taxon>
    </lineage>
</organism>